<dbReference type="EMBL" id="CP000026">
    <property type="protein sequence ID" value="AAV78719.1"/>
    <property type="molecule type" value="Genomic_DNA"/>
</dbReference>
<dbReference type="RefSeq" id="WP_000004686.1">
    <property type="nucleotide sequence ID" value="NC_006511.1"/>
</dbReference>
<dbReference type="SMR" id="Q5PEN8"/>
<dbReference type="KEGG" id="spt:SPA2874"/>
<dbReference type="HOGENOM" id="CLU_047399_0_0_6"/>
<dbReference type="Proteomes" id="UP000008185">
    <property type="component" value="Chromosome"/>
</dbReference>
<dbReference type="GO" id="GO:0005886">
    <property type="term" value="C:plasma membrane"/>
    <property type="evidence" value="ECO:0007669"/>
    <property type="project" value="UniProtKB-SubCell"/>
</dbReference>
<dbReference type="GO" id="GO:0051978">
    <property type="term" value="F:lysophospholipid:sodium symporter activity"/>
    <property type="evidence" value="ECO:0007669"/>
    <property type="project" value="InterPro"/>
</dbReference>
<dbReference type="CDD" id="cd06173">
    <property type="entry name" value="MFS_MefA_like"/>
    <property type="match status" value="1"/>
</dbReference>
<dbReference type="Gene3D" id="1.20.1250.20">
    <property type="entry name" value="MFS general substrate transporter like domains"/>
    <property type="match status" value="1"/>
</dbReference>
<dbReference type="HAMAP" id="MF_01585">
    <property type="entry name" value="MFS_LplT"/>
    <property type="match status" value="1"/>
</dbReference>
<dbReference type="InterPro" id="IPR023727">
    <property type="entry name" value="LysoPLipid__transptr_LplT"/>
</dbReference>
<dbReference type="InterPro" id="IPR011701">
    <property type="entry name" value="MFS"/>
</dbReference>
<dbReference type="InterPro" id="IPR036259">
    <property type="entry name" value="MFS_trans_sf"/>
</dbReference>
<dbReference type="NCBIfam" id="NF008397">
    <property type="entry name" value="PRK11195.1"/>
    <property type="match status" value="1"/>
</dbReference>
<dbReference type="PANTHER" id="PTHR43266">
    <property type="entry name" value="MACROLIDE-EFFLUX PROTEIN"/>
    <property type="match status" value="1"/>
</dbReference>
<dbReference type="PANTHER" id="PTHR43266:SF2">
    <property type="entry name" value="MAJOR FACILITATOR SUPERFAMILY (MFS) PROFILE DOMAIN-CONTAINING PROTEIN"/>
    <property type="match status" value="1"/>
</dbReference>
<dbReference type="Pfam" id="PF07690">
    <property type="entry name" value="MFS_1"/>
    <property type="match status" value="1"/>
</dbReference>
<dbReference type="SUPFAM" id="SSF103473">
    <property type="entry name" value="MFS general substrate transporter"/>
    <property type="match status" value="1"/>
</dbReference>
<comment type="function">
    <text evidence="1">Catalyzes the facilitated diffusion of 2-acyl-glycero-3-phosphoethanolamine (2-acyl-GPE) into the cell.</text>
</comment>
<comment type="subcellular location">
    <subcellularLocation>
        <location evidence="1">Cell inner membrane</location>
        <topology evidence="1">Multi-pass membrane protein</topology>
    </subcellularLocation>
</comment>
<comment type="similarity">
    <text evidence="1">Belongs to the major facilitator superfamily. LplT (TC 2.A.1.42) family.</text>
</comment>
<sequence>MSESVRTNTSIWSKGMLSVIVAQFLSAFGDNALLFATLALLKAQFYPDWSQPVLQMVFVGAYILFAPFVGQIADSFAKGRVMMVANGLKLAGAAGICLGVNPFVGYTLVGIGAAAYSPAKYGILGELTTGDKLVKANGLMEASTIAAILLGSVAGGVLADWHVIAALVACALAYAGAVAANLFIPKLVAARPGQSWRLSAMTRSFFSACVVLWRNGETRFSLVGTGLFWGAGVTLRFLLVLWVPVALGITDNATPTYLNAMVAVGIVVGAGAAAKLVTLETVSRCMPAGILIGVVVAIFSLQHALLPAYALLLLIGMLGGFFVVPLNALLQERGKKSVGAGNAIAVQNLGENSAMLLMLGLYSLAVLVGVPAVAIGIGFGVLFALAIAALWIWQRRQASY</sequence>
<accession>Q5PEN8</accession>
<reference key="1">
    <citation type="journal article" date="2004" name="Nat. Genet.">
        <title>Comparison of genome degradation in Paratyphi A and Typhi, human-restricted serovars of Salmonella enterica that cause typhoid.</title>
        <authorList>
            <person name="McClelland M."/>
            <person name="Sanderson K.E."/>
            <person name="Clifton S.W."/>
            <person name="Latreille P."/>
            <person name="Porwollik S."/>
            <person name="Sabo A."/>
            <person name="Meyer R."/>
            <person name="Bieri T."/>
            <person name="Ozersky P."/>
            <person name="McLellan M."/>
            <person name="Harkins C.R."/>
            <person name="Wang C."/>
            <person name="Nguyen C."/>
            <person name="Berghoff A."/>
            <person name="Elliott G."/>
            <person name="Kohlberg S."/>
            <person name="Strong C."/>
            <person name="Du F."/>
            <person name="Carter J."/>
            <person name="Kremizki C."/>
            <person name="Layman D."/>
            <person name="Leonard S."/>
            <person name="Sun H."/>
            <person name="Fulton L."/>
            <person name="Nash W."/>
            <person name="Miner T."/>
            <person name="Minx P."/>
            <person name="Delehaunty K."/>
            <person name="Fronick C."/>
            <person name="Magrini V."/>
            <person name="Nhan M."/>
            <person name="Warren W."/>
            <person name="Florea L."/>
            <person name="Spieth J."/>
            <person name="Wilson R.K."/>
        </authorList>
    </citation>
    <scope>NUCLEOTIDE SEQUENCE [LARGE SCALE GENOMIC DNA]</scope>
    <source>
        <strain>ATCC 9150 / SARB42</strain>
    </source>
</reference>
<name>LPLT_SALPA</name>
<evidence type="ECO:0000255" key="1">
    <source>
        <dbReference type="HAMAP-Rule" id="MF_01585"/>
    </source>
</evidence>
<gene>
    <name evidence="1" type="primary">lplT</name>
    <name type="ordered locus">SPA2874</name>
</gene>
<organism>
    <name type="scientific">Salmonella paratyphi A (strain ATCC 9150 / SARB42)</name>
    <dbReference type="NCBI Taxonomy" id="295319"/>
    <lineage>
        <taxon>Bacteria</taxon>
        <taxon>Pseudomonadati</taxon>
        <taxon>Pseudomonadota</taxon>
        <taxon>Gammaproteobacteria</taxon>
        <taxon>Enterobacterales</taxon>
        <taxon>Enterobacteriaceae</taxon>
        <taxon>Salmonella</taxon>
    </lineage>
</organism>
<feature type="chain" id="PRO_0000309831" description="Lysophospholipid transporter LplT">
    <location>
        <begin position="1"/>
        <end position="400"/>
    </location>
</feature>
<feature type="transmembrane region" description="Helical" evidence="1">
    <location>
        <begin position="19"/>
        <end position="39"/>
    </location>
</feature>
<feature type="transmembrane region" description="Helical" evidence="1">
    <location>
        <begin position="53"/>
        <end position="73"/>
    </location>
</feature>
<feature type="transmembrane region" description="Helical" evidence="1">
    <location>
        <begin position="91"/>
        <end position="111"/>
    </location>
</feature>
<feature type="transmembrane region" description="Helical" evidence="1">
    <location>
        <begin position="139"/>
        <end position="159"/>
    </location>
</feature>
<feature type="transmembrane region" description="Helical" evidence="1">
    <location>
        <begin position="164"/>
        <end position="184"/>
    </location>
</feature>
<feature type="transmembrane region" description="Helical" evidence="1">
    <location>
        <begin position="195"/>
        <end position="213"/>
    </location>
</feature>
<feature type="transmembrane region" description="Helical" evidence="1">
    <location>
        <begin position="227"/>
        <end position="247"/>
    </location>
</feature>
<feature type="transmembrane region" description="Helical" evidence="1">
    <location>
        <begin position="257"/>
        <end position="277"/>
    </location>
</feature>
<feature type="transmembrane region" description="Helical" evidence="1">
    <location>
        <begin position="281"/>
        <end position="301"/>
    </location>
</feature>
<feature type="transmembrane region" description="Helical" evidence="1">
    <location>
        <begin position="304"/>
        <end position="324"/>
    </location>
</feature>
<feature type="transmembrane region" description="Helical" evidence="1">
    <location>
        <begin position="352"/>
        <end position="372"/>
    </location>
</feature>
<feature type="transmembrane region" description="Helical" evidence="1">
    <location>
        <begin position="373"/>
        <end position="393"/>
    </location>
</feature>
<keyword id="KW-0997">Cell inner membrane</keyword>
<keyword id="KW-1003">Cell membrane</keyword>
<keyword id="KW-0445">Lipid transport</keyword>
<keyword id="KW-0472">Membrane</keyword>
<keyword id="KW-0812">Transmembrane</keyword>
<keyword id="KW-1133">Transmembrane helix</keyword>
<keyword id="KW-0813">Transport</keyword>
<protein>
    <recommendedName>
        <fullName evidence="1">Lysophospholipid transporter LplT</fullName>
    </recommendedName>
</protein>
<proteinExistence type="inferred from homology"/>